<proteinExistence type="inferred from homology"/>
<gene>
    <name evidence="2" type="primary">trmB</name>
    <name type="ordered locus">MMOB4960</name>
</gene>
<feature type="chain" id="PRO_0000171355" description="tRNA (guanine-N(7)-)-methyltransferase">
    <location>
        <begin position="1"/>
        <end position="201"/>
    </location>
</feature>
<feature type="active site" evidence="1">
    <location>
        <position position="107"/>
    </location>
</feature>
<feature type="binding site" evidence="2">
    <location>
        <position position="34"/>
    </location>
    <ligand>
        <name>S-adenosyl-L-methionine</name>
        <dbReference type="ChEBI" id="CHEBI:59789"/>
    </ligand>
</feature>
<feature type="binding site" evidence="2">
    <location>
        <position position="59"/>
    </location>
    <ligand>
        <name>S-adenosyl-L-methionine</name>
        <dbReference type="ChEBI" id="CHEBI:59789"/>
    </ligand>
</feature>
<feature type="binding site" evidence="2">
    <location>
        <position position="86"/>
    </location>
    <ligand>
        <name>S-adenosyl-L-methionine</name>
        <dbReference type="ChEBI" id="CHEBI:59789"/>
    </ligand>
</feature>
<feature type="binding site" evidence="2">
    <location>
        <position position="107"/>
    </location>
    <ligand>
        <name>S-adenosyl-L-methionine</name>
        <dbReference type="ChEBI" id="CHEBI:59789"/>
    </ligand>
</feature>
<feature type="binding site" evidence="2">
    <location>
        <position position="111"/>
    </location>
    <ligand>
        <name>substrate</name>
    </ligand>
</feature>
<feature type="binding site" evidence="2">
    <location>
        <position position="143"/>
    </location>
    <ligand>
        <name>substrate</name>
    </ligand>
</feature>
<feature type="binding site" evidence="2">
    <location>
        <begin position="181"/>
        <end position="184"/>
    </location>
    <ligand>
        <name>substrate</name>
    </ligand>
</feature>
<evidence type="ECO:0000250" key="1"/>
<evidence type="ECO:0000255" key="2">
    <source>
        <dbReference type="HAMAP-Rule" id="MF_01057"/>
    </source>
</evidence>
<comment type="function">
    <text evidence="2">Catalyzes the formation of N(7)-methylguanine at position 46 (m7G46) in tRNA.</text>
</comment>
<comment type="catalytic activity">
    <reaction evidence="2">
        <text>guanosine(46) in tRNA + S-adenosyl-L-methionine = N(7)-methylguanosine(46) in tRNA + S-adenosyl-L-homocysteine</text>
        <dbReference type="Rhea" id="RHEA:42708"/>
        <dbReference type="Rhea" id="RHEA-COMP:10188"/>
        <dbReference type="Rhea" id="RHEA-COMP:10189"/>
        <dbReference type="ChEBI" id="CHEBI:57856"/>
        <dbReference type="ChEBI" id="CHEBI:59789"/>
        <dbReference type="ChEBI" id="CHEBI:74269"/>
        <dbReference type="ChEBI" id="CHEBI:74480"/>
        <dbReference type="EC" id="2.1.1.33"/>
    </reaction>
</comment>
<comment type="pathway">
    <text evidence="2">tRNA modification; N(7)-methylguanine-tRNA biosynthesis.</text>
</comment>
<comment type="similarity">
    <text evidence="2">Belongs to the class I-like SAM-binding methyltransferase superfamily. TrmB family.</text>
</comment>
<accession>Q6KHE8</accession>
<dbReference type="EC" id="2.1.1.33" evidence="2"/>
<dbReference type="EMBL" id="AE017308">
    <property type="protein sequence ID" value="AAT27982.1"/>
    <property type="molecule type" value="Genomic_DNA"/>
</dbReference>
<dbReference type="RefSeq" id="WP_011265016.1">
    <property type="nucleotide sequence ID" value="NC_006908.1"/>
</dbReference>
<dbReference type="SMR" id="Q6KHE8"/>
<dbReference type="STRING" id="267748.MMOB4960"/>
<dbReference type="KEGG" id="mmo:MMOB4960"/>
<dbReference type="eggNOG" id="COG0220">
    <property type="taxonomic scope" value="Bacteria"/>
</dbReference>
<dbReference type="HOGENOM" id="CLU_050910_2_1_14"/>
<dbReference type="OrthoDB" id="9802090at2"/>
<dbReference type="UniPathway" id="UPA00989"/>
<dbReference type="Proteomes" id="UP000009072">
    <property type="component" value="Chromosome"/>
</dbReference>
<dbReference type="GO" id="GO:0043527">
    <property type="term" value="C:tRNA methyltransferase complex"/>
    <property type="evidence" value="ECO:0007669"/>
    <property type="project" value="TreeGrafter"/>
</dbReference>
<dbReference type="GO" id="GO:0008176">
    <property type="term" value="F:tRNA (guanine(46)-N7)-methyltransferase activity"/>
    <property type="evidence" value="ECO:0007669"/>
    <property type="project" value="UniProtKB-UniRule"/>
</dbReference>
<dbReference type="CDD" id="cd02440">
    <property type="entry name" value="AdoMet_MTases"/>
    <property type="match status" value="1"/>
</dbReference>
<dbReference type="Gene3D" id="3.40.50.150">
    <property type="entry name" value="Vaccinia Virus protein VP39"/>
    <property type="match status" value="1"/>
</dbReference>
<dbReference type="HAMAP" id="MF_01057">
    <property type="entry name" value="tRNA_methyltr_TrmB"/>
    <property type="match status" value="1"/>
</dbReference>
<dbReference type="InterPro" id="IPR029063">
    <property type="entry name" value="SAM-dependent_MTases_sf"/>
</dbReference>
<dbReference type="InterPro" id="IPR003358">
    <property type="entry name" value="tRNA_(Gua-N-7)_MeTrfase_Trmb"/>
</dbReference>
<dbReference type="InterPro" id="IPR055361">
    <property type="entry name" value="tRNA_methyltr_TrmB_bact"/>
</dbReference>
<dbReference type="NCBIfam" id="NF001080">
    <property type="entry name" value="PRK00121.2-2"/>
    <property type="match status" value="1"/>
</dbReference>
<dbReference type="NCBIfam" id="TIGR00091">
    <property type="entry name" value="tRNA (guanosine(46)-N7)-methyltransferase TrmB"/>
    <property type="match status" value="1"/>
</dbReference>
<dbReference type="PANTHER" id="PTHR23417">
    <property type="entry name" value="3-DEOXY-D-MANNO-OCTULOSONIC-ACID TRANSFERASE/TRNA GUANINE-N 7 - -METHYLTRANSFERASE"/>
    <property type="match status" value="1"/>
</dbReference>
<dbReference type="PANTHER" id="PTHR23417:SF14">
    <property type="entry name" value="PENTACOTRIPEPTIDE-REPEAT REGION OF PRORP DOMAIN-CONTAINING PROTEIN"/>
    <property type="match status" value="1"/>
</dbReference>
<dbReference type="Pfam" id="PF02390">
    <property type="entry name" value="Methyltransf_4"/>
    <property type="match status" value="1"/>
</dbReference>
<dbReference type="SUPFAM" id="SSF53335">
    <property type="entry name" value="S-adenosyl-L-methionine-dependent methyltransferases"/>
    <property type="match status" value="1"/>
</dbReference>
<dbReference type="PROSITE" id="PS51625">
    <property type="entry name" value="SAM_MT_TRMB"/>
    <property type="match status" value="1"/>
</dbReference>
<protein>
    <recommendedName>
        <fullName evidence="2">tRNA (guanine-N(7)-)-methyltransferase</fullName>
        <ecNumber evidence="2">2.1.1.33</ecNumber>
    </recommendedName>
    <alternativeName>
        <fullName evidence="2">tRNA (guanine(46)-N(7))-methyltransferase</fullName>
    </alternativeName>
    <alternativeName>
        <fullName evidence="2">tRNA(m7G46)-methyltransferase</fullName>
    </alternativeName>
</protein>
<sequence length="201" mass="23579">MRVRRDKNLEKILDVDPLVISKFPFKLKQDTIIELGSGKGTMISALALKNPSQNYLCVERDRTIASKAIEKFNDLNLKNINLIVSDIQHLTEIIENKVNTIWLTFSDPWPKNRHEHRRLTYKTFLDLYKKFLSPQGVIKLKTDNDKFFHYSLESMSEFGMKILYQTNDLHNSIKNLDNEMTDYEKKWSSLGKSINYLEASF</sequence>
<organism>
    <name type="scientific">Mycoplasma mobile (strain ATCC 43663 / 163K / NCTC 11711)</name>
    <name type="common">Mesomycoplasma mobile</name>
    <dbReference type="NCBI Taxonomy" id="267748"/>
    <lineage>
        <taxon>Bacteria</taxon>
        <taxon>Bacillati</taxon>
        <taxon>Mycoplasmatota</taxon>
        <taxon>Mycoplasmoidales</taxon>
        <taxon>Metamycoplasmataceae</taxon>
        <taxon>Mesomycoplasma</taxon>
    </lineage>
</organism>
<reference key="1">
    <citation type="journal article" date="2004" name="Genome Res.">
        <title>The complete genome and proteome of Mycoplasma mobile.</title>
        <authorList>
            <person name="Jaffe J.D."/>
            <person name="Stange-Thomann N."/>
            <person name="Smith C."/>
            <person name="DeCaprio D."/>
            <person name="Fisher S."/>
            <person name="Butler J."/>
            <person name="Calvo S."/>
            <person name="Elkins T."/>
            <person name="FitzGerald M.G."/>
            <person name="Hafez N."/>
            <person name="Kodira C.D."/>
            <person name="Major J."/>
            <person name="Wang S."/>
            <person name="Wilkinson J."/>
            <person name="Nicol R."/>
            <person name="Nusbaum C."/>
            <person name="Birren B."/>
            <person name="Berg H.C."/>
            <person name="Church G.M."/>
        </authorList>
    </citation>
    <scope>NUCLEOTIDE SEQUENCE [LARGE SCALE GENOMIC DNA]</scope>
    <source>
        <strain>ATCC 43663 / NCTC 11711 / 163 K</strain>
    </source>
</reference>
<keyword id="KW-0489">Methyltransferase</keyword>
<keyword id="KW-1185">Reference proteome</keyword>
<keyword id="KW-0949">S-adenosyl-L-methionine</keyword>
<keyword id="KW-0808">Transferase</keyword>
<keyword id="KW-0819">tRNA processing</keyword>
<name>TRMB_MYCM1</name>